<protein>
    <recommendedName>
        <fullName evidence="1">Small ribosomal subunit protein uS11</fullName>
    </recommendedName>
    <alternativeName>
        <fullName evidence="2">30S ribosomal protein S11</fullName>
    </alternativeName>
</protein>
<sequence length="127" mass="13643">MNQTVKVKKKKKTITLGVVHIRASFNNTIVTFTDIQGNTISSASAGGNGFKGARKATPYAAQVTVDRASEKAKEYGLKTISIRIGGPGAQRESAMRALFGQNFVVTSILDVSSIAHNGVRPPKRRRV</sequence>
<accession>B0BUN7</accession>
<gene>
    <name evidence="1" type="primary">rpsK</name>
    <name type="ordered locus">RrIowa_1174</name>
</gene>
<name>RS11_RICRO</name>
<comment type="function">
    <text evidence="1">Located on the platform of the 30S subunit, it bridges several disparate RNA helices of the 16S rRNA. Forms part of the Shine-Dalgarno cleft in the 70S ribosome.</text>
</comment>
<comment type="subunit">
    <text evidence="1">Part of the 30S ribosomal subunit. Interacts with proteins S7 and S18. Binds to IF-3.</text>
</comment>
<comment type="similarity">
    <text evidence="1">Belongs to the universal ribosomal protein uS11 family.</text>
</comment>
<dbReference type="EMBL" id="CP000766">
    <property type="protein sequence ID" value="ABY72947.1"/>
    <property type="molecule type" value="Genomic_DNA"/>
</dbReference>
<dbReference type="RefSeq" id="WP_012151134.1">
    <property type="nucleotide sequence ID" value="NC_010263.3"/>
</dbReference>
<dbReference type="SMR" id="B0BUN7"/>
<dbReference type="GeneID" id="79937647"/>
<dbReference type="KEGG" id="rrj:RrIowa_1174"/>
<dbReference type="eggNOG" id="COG0100">
    <property type="taxonomic scope" value="Bacteria"/>
</dbReference>
<dbReference type="HOGENOM" id="CLU_072439_5_0_5"/>
<dbReference type="Proteomes" id="UP000000796">
    <property type="component" value="Chromosome"/>
</dbReference>
<dbReference type="GO" id="GO:1990904">
    <property type="term" value="C:ribonucleoprotein complex"/>
    <property type="evidence" value="ECO:0007669"/>
    <property type="project" value="UniProtKB-KW"/>
</dbReference>
<dbReference type="GO" id="GO:0005840">
    <property type="term" value="C:ribosome"/>
    <property type="evidence" value="ECO:0007669"/>
    <property type="project" value="UniProtKB-KW"/>
</dbReference>
<dbReference type="GO" id="GO:0019843">
    <property type="term" value="F:rRNA binding"/>
    <property type="evidence" value="ECO:0007669"/>
    <property type="project" value="UniProtKB-UniRule"/>
</dbReference>
<dbReference type="GO" id="GO:0003735">
    <property type="term" value="F:structural constituent of ribosome"/>
    <property type="evidence" value="ECO:0007669"/>
    <property type="project" value="InterPro"/>
</dbReference>
<dbReference type="GO" id="GO:0006412">
    <property type="term" value="P:translation"/>
    <property type="evidence" value="ECO:0007669"/>
    <property type="project" value="UniProtKB-UniRule"/>
</dbReference>
<dbReference type="Gene3D" id="3.30.420.80">
    <property type="entry name" value="Ribosomal protein S11"/>
    <property type="match status" value="1"/>
</dbReference>
<dbReference type="HAMAP" id="MF_01310">
    <property type="entry name" value="Ribosomal_uS11"/>
    <property type="match status" value="1"/>
</dbReference>
<dbReference type="InterPro" id="IPR001971">
    <property type="entry name" value="Ribosomal_uS11"/>
</dbReference>
<dbReference type="InterPro" id="IPR019981">
    <property type="entry name" value="Ribosomal_uS11_bac-type"/>
</dbReference>
<dbReference type="InterPro" id="IPR018102">
    <property type="entry name" value="Ribosomal_uS11_CS"/>
</dbReference>
<dbReference type="InterPro" id="IPR036967">
    <property type="entry name" value="Ribosomal_uS11_sf"/>
</dbReference>
<dbReference type="NCBIfam" id="NF003698">
    <property type="entry name" value="PRK05309.1"/>
    <property type="match status" value="1"/>
</dbReference>
<dbReference type="NCBIfam" id="TIGR03632">
    <property type="entry name" value="uS11_bact"/>
    <property type="match status" value="1"/>
</dbReference>
<dbReference type="PANTHER" id="PTHR11759">
    <property type="entry name" value="40S RIBOSOMAL PROTEIN S14/30S RIBOSOMAL PROTEIN S11"/>
    <property type="match status" value="1"/>
</dbReference>
<dbReference type="Pfam" id="PF00411">
    <property type="entry name" value="Ribosomal_S11"/>
    <property type="match status" value="1"/>
</dbReference>
<dbReference type="PIRSF" id="PIRSF002131">
    <property type="entry name" value="Ribosomal_S11"/>
    <property type="match status" value="1"/>
</dbReference>
<dbReference type="SUPFAM" id="SSF53137">
    <property type="entry name" value="Translational machinery components"/>
    <property type="match status" value="1"/>
</dbReference>
<dbReference type="PROSITE" id="PS00054">
    <property type="entry name" value="RIBOSOMAL_S11"/>
    <property type="match status" value="1"/>
</dbReference>
<evidence type="ECO:0000255" key="1">
    <source>
        <dbReference type="HAMAP-Rule" id="MF_01310"/>
    </source>
</evidence>
<evidence type="ECO:0000305" key="2"/>
<keyword id="KW-0687">Ribonucleoprotein</keyword>
<keyword id="KW-0689">Ribosomal protein</keyword>
<keyword id="KW-0694">RNA-binding</keyword>
<keyword id="KW-0699">rRNA-binding</keyword>
<feature type="chain" id="PRO_1000086204" description="Small ribosomal subunit protein uS11">
    <location>
        <begin position="1"/>
        <end position="127"/>
    </location>
</feature>
<organism>
    <name type="scientific">Rickettsia rickettsii (strain Iowa)</name>
    <dbReference type="NCBI Taxonomy" id="452659"/>
    <lineage>
        <taxon>Bacteria</taxon>
        <taxon>Pseudomonadati</taxon>
        <taxon>Pseudomonadota</taxon>
        <taxon>Alphaproteobacteria</taxon>
        <taxon>Rickettsiales</taxon>
        <taxon>Rickettsiaceae</taxon>
        <taxon>Rickettsieae</taxon>
        <taxon>Rickettsia</taxon>
        <taxon>spotted fever group</taxon>
    </lineage>
</organism>
<proteinExistence type="inferred from homology"/>
<reference key="1">
    <citation type="journal article" date="2008" name="Infect. Immun.">
        <title>Genomic comparison of virulent Rickettsia rickettsii Sheila Smith and avirulent Rickettsia rickettsii Iowa.</title>
        <authorList>
            <person name="Ellison D.W."/>
            <person name="Clark T.R."/>
            <person name="Sturdevant D.E."/>
            <person name="Virtaneva K."/>
            <person name="Porcella S.F."/>
            <person name="Hackstadt T."/>
        </authorList>
    </citation>
    <scope>NUCLEOTIDE SEQUENCE [LARGE SCALE GENOMIC DNA]</scope>
    <source>
        <strain>Iowa</strain>
    </source>
</reference>